<sequence length="253" mass="29305">MDYXNFGNSASKKFQDDTLNRVRKEHEEALKKLREENFSSNTSELGNKKHYRAQERMSSPLHRLSPTGKSDDRKVKSPLDDKLRRQLREGNTRLPPPPFSSYGMPPTNRSNLDRIRRRTSSPVRTDKFASQNVIDDQRLEIKYLERIVYDQGTVIDNLTSRITRLESFILNSISDRGDKNFASLEHSRSFSGFPTNKTYGLQMGGLYENDMPYRRSSDNINKEGAREDRSSQIHIENESTEDILKILSSSFHN</sequence>
<proteinExistence type="inferred from homology"/>
<feature type="chain" id="PRO_0000409197" description="Spindle pole component 29">
    <location>
        <begin position="1"/>
        <end position="253"/>
    </location>
</feature>
<feature type="region of interest" description="Disordered" evidence="3">
    <location>
        <begin position="1"/>
        <end position="20"/>
    </location>
</feature>
<feature type="region of interest" description="Disordered" evidence="3">
    <location>
        <begin position="31"/>
        <end position="123"/>
    </location>
</feature>
<feature type="region of interest" description="Disordered" evidence="3">
    <location>
        <begin position="210"/>
        <end position="231"/>
    </location>
</feature>
<feature type="compositionally biased region" description="Polar residues" evidence="3">
    <location>
        <begin position="1"/>
        <end position="12"/>
    </location>
</feature>
<feature type="compositionally biased region" description="Basic and acidic residues" evidence="3">
    <location>
        <begin position="69"/>
        <end position="91"/>
    </location>
</feature>
<feature type="compositionally biased region" description="Basic and acidic residues" evidence="3">
    <location>
        <begin position="211"/>
        <end position="231"/>
    </location>
</feature>
<feature type="modified residue" description="Phosphothreonine" evidence="2">
    <location>
        <position position="18"/>
    </location>
</feature>
<feature type="modified residue" description="Phosphoserine" evidence="2">
    <location>
        <position position="65"/>
    </location>
</feature>
<feature type="modified residue" description="Phosphothreonine; by MPS1" evidence="2">
    <location>
        <position position="240"/>
    </location>
</feature>
<name>SPC29_YEASZ</name>
<accession>E7QLB7</accession>
<gene>
    <name type="primary">SPC29</name>
    <name type="synonym">LPH3</name>
    <name type="synonym">NIP29</name>
    <name type="ORF">VL3_4851</name>
</gene>
<evidence type="ECO:0000250" key="1"/>
<evidence type="ECO:0000250" key="2">
    <source>
        <dbReference type="UniProtKB" id="P33419"/>
    </source>
</evidence>
<evidence type="ECO:0000256" key="3">
    <source>
        <dbReference type="SAM" id="MobiDB-lite"/>
    </source>
</evidence>
<evidence type="ECO:0000305" key="4"/>
<keyword id="KW-0963">Cytoplasm</keyword>
<keyword id="KW-0206">Cytoskeleton</keyword>
<keyword id="KW-0539">Nucleus</keyword>
<keyword id="KW-0597">Phosphoprotein</keyword>
<comment type="function">
    <text evidence="1">Component of the spindle pole body (SPB) required for the proper execution of spindle pole body (SPB) duplication. Links the central plaque component SPC42 to the inner plaque component SPC110 (By similarity).</text>
</comment>
<comment type="subunit">
    <text evidence="1">Component of the SPC110 complex containing at least CMD1, SPC29, SPC42 and SCP110. Interacts with BBP1.</text>
</comment>
<comment type="subcellular location">
    <subcellularLocation>
        <location evidence="1">Nucleus</location>
    </subcellularLocation>
    <subcellularLocation>
        <location evidence="1">Cytoplasm</location>
        <location evidence="1">Cytoskeleton</location>
        <location evidence="1">Microtubule organizing center</location>
        <location evidence="1">Spindle pole body</location>
    </subcellularLocation>
</comment>
<comment type="PTM">
    <text evidence="1">MPS1-mediated phosphorylation at Thr-240 is required for spindle pole body duplication.</text>
</comment>
<comment type="similarity">
    <text evidence="4">Belongs to the SPC29 family.</text>
</comment>
<protein>
    <recommendedName>
        <fullName>Spindle pole component 29</fullName>
    </recommendedName>
</protein>
<organism>
    <name type="scientific">Saccharomyces cerevisiae (strain Zymaflore VL3)</name>
    <name type="common">Baker's yeast</name>
    <dbReference type="NCBI Taxonomy" id="764100"/>
    <lineage>
        <taxon>Eukaryota</taxon>
        <taxon>Fungi</taxon>
        <taxon>Dikarya</taxon>
        <taxon>Ascomycota</taxon>
        <taxon>Saccharomycotina</taxon>
        <taxon>Saccharomycetes</taxon>
        <taxon>Saccharomycetales</taxon>
        <taxon>Saccharomycetaceae</taxon>
        <taxon>Saccharomyces</taxon>
    </lineage>
</organism>
<reference key="1">
    <citation type="journal article" date="2011" name="PLoS Genet.">
        <title>Whole-genome comparison reveals novel genetic elements that characterize the genome of industrial strains of Saccharomyces cerevisiae.</title>
        <authorList>
            <person name="Borneman A.R."/>
            <person name="Desany B.A."/>
            <person name="Riches D."/>
            <person name="Affourtit J.P."/>
            <person name="Forgan A.H."/>
            <person name="Pretorius I.S."/>
            <person name="Egholm M."/>
            <person name="Chambers P.J."/>
        </authorList>
    </citation>
    <scope>NUCLEOTIDE SEQUENCE [LARGE SCALE GENOMIC DNA]</scope>
    <source>
        <strain>Zymaflore VL3</strain>
    </source>
</reference>
<dbReference type="EMBL" id="AEJS01000063">
    <property type="protein sequence ID" value="EGA84537.1"/>
    <property type="molecule type" value="Genomic_DNA"/>
</dbReference>
<dbReference type="HOGENOM" id="CLU_1099229_0_0_1"/>
<dbReference type="OrthoDB" id="4043735at2759"/>
<dbReference type="GO" id="GO:0005823">
    <property type="term" value="C:central plaque of spindle pole body"/>
    <property type="evidence" value="ECO:0007669"/>
    <property type="project" value="InterPro"/>
</dbReference>
<dbReference type="GO" id="GO:0005737">
    <property type="term" value="C:cytoplasm"/>
    <property type="evidence" value="ECO:0007669"/>
    <property type="project" value="UniProtKB-KW"/>
</dbReference>
<dbReference type="GO" id="GO:0005634">
    <property type="term" value="C:nucleus"/>
    <property type="evidence" value="ECO:0007669"/>
    <property type="project" value="UniProtKB-SubCell"/>
</dbReference>
<dbReference type="GO" id="GO:0005200">
    <property type="term" value="F:structural constituent of cytoskeleton"/>
    <property type="evidence" value="ECO:0007669"/>
    <property type="project" value="InterPro"/>
</dbReference>
<dbReference type="GO" id="GO:0030474">
    <property type="term" value="P:spindle pole body duplication"/>
    <property type="evidence" value="ECO:0007669"/>
    <property type="project" value="InterPro"/>
</dbReference>
<dbReference type="InterPro" id="IPR031392">
    <property type="entry name" value="Spc29"/>
</dbReference>
<dbReference type="Pfam" id="PF17082">
    <property type="entry name" value="Spc29"/>
    <property type="match status" value="1"/>
</dbReference>